<name>HIS7_CERS1</name>
<keyword id="KW-0028">Amino-acid biosynthesis</keyword>
<keyword id="KW-0963">Cytoplasm</keyword>
<keyword id="KW-0368">Histidine biosynthesis</keyword>
<keyword id="KW-0456">Lyase</keyword>
<evidence type="ECO:0000255" key="1">
    <source>
        <dbReference type="HAMAP-Rule" id="MF_00076"/>
    </source>
</evidence>
<proteinExistence type="inferred from homology"/>
<comment type="catalytic activity">
    <reaction evidence="1">
        <text>D-erythro-1-(imidazol-4-yl)glycerol 3-phosphate = 3-(imidazol-4-yl)-2-oxopropyl phosphate + H2O</text>
        <dbReference type="Rhea" id="RHEA:11040"/>
        <dbReference type="ChEBI" id="CHEBI:15377"/>
        <dbReference type="ChEBI" id="CHEBI:57766"/>
        <dbReference type="ChEBI" id="CHEBI:58278"/>
        <dbReference type="EC" id="4.2.1.19"/>
    </reaction>
</comment>
<comment type="pathway">
    <text evidence="1">Amino-acid biosynthesis; L-histidine biosynthesis; L-histidine from 5-phospho-alpha-D-ribose 1-diphosphate: step 6/9.</text>
</comment>
<comment type="subcellular location">
    <subcellularLocation>
        <location evidence="1">Cytoplasm</location>
    </subcellularLocation>
</comment>
<comment type="similarity">
    <text evidence="1">Belongs to the imidazoleglycerol-phosphate dehydratase family.</text>
</comment>
<dbReference type="EC" id="4.2.1.19" evidence="1"/>
<dbReference type="EMBL" id="CP000577">
    <property type="protein sequence ID" value="ABN76032.1"/>
    <property type="molecule type" value="Genomic_DNA"/>
</dbReference>
<dbReference type="RefSeq" id="WP_002719406.1">
    <property type="nucleotide sequence ID" value="NC_009049.1"/>
</dbReference>
<dbReference type="SMR" id="A3PI66"/>
<dbReference type="KEGG" id="rsh:Rsph17029_0921"/>
<dbReference type="HOGENOM" id="CLU_044308_2_0_5"/>
<dbReference type="UniPathway" id="UPA00031">
    <property type="reaction ID" value="UER00011"/>
</dbReference>
<dbReference type="GO" id="GO:0005737">
    <property type="term" value="C:cytoplasm"/>
    <property type="evidence" value="ECO:0007669"/>
    <property type="project" value="UniProtKB-SubCell"/>
</dbReference>
<dbReference type="GO" id="GO:0004424">
    <property type="term" value="F:imidazoleglycerol-phosphate dehydratase activity"/>
    <property type="evidence" value="ECO:0007669"/>
    <property type="project" value="UniProtKB-UniRule"/>
</dbReference>
<dbReference type="GO" id="GO:0000105">
    <property type="term" value="P:L-histidine biosynthetic process"/>
    <property type="evidence" value="ECO:0007669"/>
    <property type="project" value="UniProtKB-UniRule"/>
</dbReference>
<dbReference type="CDD" id="cd07914">
    <property type="entry name" value="IGPD"/>
    <property type="match status" value="1"/>
</dbReference>
<dbReference type="FunFam" id="3.30.230.40:FF:000001">
    <property type="entry name" value="Imidazoleglycerol-phosphate dehydratase HisB"/>
    <property type="match status" value="1"/>
</dbReference>
<dbReference type="FunFam" id="3.30.230.40:FF:000003">
    <property type="entry name" value="Imidazoleglycerol-phosphate dehydratase HisB"/>
    <property type="match status" value="1"/>
</dbReference>
<dbReference type="Gene3D" id="3.30.230.40">
    <property type="entry name" value="Imidazole glycerol phosphate dehydratase, domain 1"/>
    <property type="match status" value="2"/>
</dbReference>
<dbReference type="HAMAP" id="MF_00076">
    <property type="entry name" value="HisB"/>
    <property type="match status" value="1"/>
</dbReference>
<dbReference type="InterPro" id="IPR038494">
    <property type="entry name" value="IGPD_sf"/>
</dbReference>
<dbReference type="InterPro" id="IPR000807">
    <property type="entry name" value="ImidazoleglycerolP_deHydtase"/>
</dbReference>
<dbReference type="InterPro" id="IPR020565">
    <property type="entry name" value="ImidazoleglycerP_deHydtase_CS"/>
</dbReference>
<dbReference type="InterPro" id="IPR020568">
    <property type="entry name" value="Ribosomal_Su5_D2-typ_SF"/>
</dbReference>
<dbReference type="NCBIfam" id="NF002106">
    <property type="entry name" value="PRK00951.1-1"/>
    <property type="match status" value="1"/>
</dbReference>
<dbReference type="NCBIfam" id="NF002109">
    <property type="entry name" value="PRK00951.1-5"/>
    <property type="match status" value="1"/>
</dbReference>
<dbReference type="NCBIfam" id="NF002111">
    <property type="entry name" value="PRK00951.2-1"/>
    <property type="match status" value="1"/>
</dbReference>
<dbReference type="NCBIfam" id="NF002114">
    <property type="entry name" value="PRK00951.2-4"/>
    <property type="match status" value="1"/>
</dbReference>
<dbReference type="PANTHER" id="PTHR23133:SF2">
    <property type="entry name" value="IMIDAZOLEGLYCEROL-PHOSPHATE DEHYDRATASE"/>
    <property type="match status" value="1"/>
</dbReference>
<dbReference type="PANTHER" id="PTHR23133">
    <property type="entry name" value="IMIDAZOLEGLYCEROL-PHOSPHATE DEHYDRATASE HIS7"/>
    <property type="match status" value="1"/>
</dbReference>
<dbReference type="Pfam" id="PF00475">
    <property type="entry name" value="IGPD"/>
    <property type="match status" value="1"/>
</dbReference>
<dbReference type="SUPFAM" id="SSF54211">
    <property type="entry name" value="Ribosomal protein S5 domain 2-like"/>
    <property type="match status" value="2"/>
</dbReference>
<dbReference type="PROSITE" id="PS00954">
    <property type="entry name" value="IGP_DEHYDRATASE_1"/>
    <property type="match status" value="1"/>
</dbReference>
<dbReference type="PROSITE" id="PS00955">
    <property type="entry name" value="IGP_DEHYDRATASE_2"/>
    <property type="match status" value="1"/>
</dbReference>
<accession>A3PI66</accession>
<feature type="chain" id="PRO_1000010346" description="Imidazoleglycerol-phosphate dehydratase">
    <location>
        <begin position="1"/>
        <end position="195"/>
    </location>
</feature>
<organism>
    <name type="scientific">Cereibacter sphaeroides (strain ATCC 17029 / ATH 2.4.9)</name>
    <name type="common">Rhodobacter sphaeroides</name>
    <dbReference type="NCBI Taxonomy" id="349101"/>
    <lineage>
        <taxon>Bacteria</taxon>
        <taxon>Pseudomonadati</taxon>
        <taxon>Pseudomonadota</taxon>
        <taxon>Alphaproteobacteria</taxon>
        <taxon>Rhodobacterales</taxon>
        <taxon>Paracoccaceae</taxon>
        <taxon>Cereibacter</taxon>
    </lineage>
</organism>
<reference key="1">
    <citation type="submission" date="2007-02" db="EMBL/GenBank/DDBJ databases">
        <title>Complete sequence of chromosome 1 of Rhodobacter sphaeroides ATCC 17029.</title>
        <authorList>
            <person name="Copeland A."/>
            <person name="Lucas S."/>
            <person name="Lapidus A."/>
            <person name="Barry K."/>
            <person name="Detter J.C."/>
            <person name="Glavina del Rio T."/>
            <person name="Hammon N."/>
            <person name="Israni S."/>
            <person name="Dalin E."/>
            <person name="Tice H."/>
            <person name="Pitluck S."/>
            <person name="Kiss H."/>
            <person name="Brettin T."/>
            <person name="Bruce D."/>
            <person name="Han C."/>
            <person name="Tapia R."/>
            <person name="Gilna P."/>
            <person name="Schmutz J."/>
            <person name="Larimer F."/>
            <person name="Land M."/>
            <person name="Hauser L."/>
            <person name="Kyrpides N."/>
            <person name="Mikhailova N."/>
            <person name="Richardson P."/>
            <person name="Mackenzie C."/>
            <person name="Choudhary M."/>
            <person name="Donohue T.J."/>
            <person name="Kaplan S."/>
        </authorList>
    </citation>
    <scope>NUCLEOTIDE SEQUENCE [LARGE SCALE GENOMIC DNA]</scope>
    <source>
        <strain>ATCC 17029 / ATH 2.4.9</strain>
    </source>
</reference>
<gene>
    <name evidence="1" type="primary">hisB</name>
    <name type="ordered locus">Rsph17029_0921</name>
</gene>
<protein>
    <recommendedName>
        <fullName evidence="1">Imidazoleglycerol-phosphate dehydratase</fullName>
        <shortName evidence="1">IGPD</shortName>
        <ecNumber evidence="1">4.2.1.19</ecNumber>
    </recommendedName>
</protein>
<sequence>MRKAEISRKTAETDISVTVDLDGTGRYDIRTGVGFFDHMMDQLARHALIDITLRCEGDLHIDDHHTVEDCGIALGQALTRALGDKRGIRRYGSFHLAMDDALVRAALDLSGRPFLVWNLPFPTEKIGSFDTELVREFFQAFATHGGITLHVDLIHGVNSHHIAEAAFKAVARSLREAVEPDPRRADAIPSTKGML</sequence>